<reference key="1">
    <citation type="journal article" date="2007" name="PLoS Genet.">
        <title>The complete genome sequence of Yersinia pseudotuberculosis IP31758, the causative agent of Far East scarlet-like fever.</title>
        <authorList>
            <person name="Eppinger M."/>
            <person name="Rosovitz M.J."/>
            <person name="Fricke W.F."/>
            <person name="Rasko D.A."/>
            <person name="Kokorina G."/>
            <person name="Fayolle C."/>
            <person name="Lindler L.E."/>
            <person name="Carniel E."/>
            <person name="Ravel J."/>
        </authorList>
    </citation>
    <scope>NUCLEOTIDE SEQUENCE [LARGE SCALE GENOMIC DNA]</scope>
    <source>
        <strain>IP 31758</strain>
    </source>
</reference>
<keyword id="KW-0997">Cell inner membrane</keyword>
<keyword id="KW-1003">Cell membrane</keyword>
<keyword id="KW-0472">Membrane</keyword>
<keyword id="KW-0812">Transmembrane</keyword>
<keyword id="KW-1133">Transmembrane helix</keyword>
<keyword id="KW-0813">Transport</keyword>
<feature type="chain" id="PRO_1000062782" description="Vitamin B12 import system permease protein BtuC">
    <location>
        <begin position="1"/>
        <end position="335"/>
    </location>
</feature>
<feature type="transmembrane region" description="Helical" evidence="1">
    <location>
        <begin position="25"/>
        <end position="45"/>
    </location>
</feature>
<feature type="transmembrane region" description="Helical" evidence="1">
    <location>
        <begin position="67"/>
        <end position="87"/>
    </location>
</feature>
<feature type="transmembrane region" description="Helical" evidence="1">
    <location>
        <begin position="94"/>
        <end position="113"/>
    </location>
</feature>
<feature type="transmembrane region" description="Helical" evidence="1">
    <location>
        <begin position="117"/>
        <end position="139"/>
    </location>
</feature>
<feature type="transmembrane region" description="Helical" evidence="1">
    <location>
        <begin position="153"/>
        <end position="173"/>
    </location>
</feature>
<feature type="transmembrane region" description="Helical" evidence="1">
    <location>
        <begin position="243"/>
        <end position="263"/>
    </location>
</feature>
<feature type="transmembrane region" description="Helical" evidence="1">
    <location>
        <begin position="281"/>
        <end position="301"/>
    </location>
</feature>
<feature type="transmembrane region" description="Helical" evidence="1">
    <location>
        <begin position="309"/>
        <end position="329"/>
    </location>
</feature>
<evidence type="ECO:0000255" key="1">
    <source>
        <dbReference type="HAMAP-Rule" id="MF_01004"/>
    </source>
</evidence>
<accession>A7FHG9</accession>
<dbReference type="EMBL" id="CP000720">
    <property type="protein sequence ID" value="ABS47946.1"/>
    <property type="molecule type" value="Genomic_DNA"/>
</dbReference>
<dbReference type="RefSeq" id="WP_002220283.1">
    <property type="nucleotide sequence ID" value="NC_009708.1"/>
</dbReference>
<dbReference type="SMR" id="A7FHG9"/>
<dbReference type="GeneID" id="57976252"/>
<dbReference type="KEGG" id="ypi:YpsIP31758_1720"/>
<dbReference type="HOGENOM" id="CLU_013016_0_3_6"/>
<dbReference type="Proteomes" id="UP000002412">
    <property type="component" value="Chromosome"/>
</dbReference>
<dbReference type="GO" id="GO:0005886">
    <property type="term" value="C:plasma membrane"/>
    <property type="evidence" value="ECO:0007669"/>
    <property type="project" value="UniProtKB-SubCell"/>
</dbReference>
<dbReference type="GO" id="GO:0090482">
    <property type="term" value="F:vitamin transmembrane transporter activity"/>
    <property type="evidence" value="ECO:0007669"/>
    <property type="project" value="UniProtKB-UniRule"/>
</dbReference>
<dbReference type="GO" id="GO:0015889">
    <property type="term" value="P:cobalamin transport"/>
    <property type="evidence" value="ECO:0007669"/>
    <property type="project" value="UniProtKB-UniRule"/>
</dbReference>
<dbReference type="CDD" id="cd06550">
    <property type="entry name" value="TM_ABC_iron-siderophores_like"/>
    <property type="match status" value="1"/>
</dbReference>
<dbReference type="FunFam" id="1.10.3470.10:FF:000001">
    <property type="entry name" value="Vitamin B12 ABC transporter permease BtuC"/>
    <property type="match status" value="1"/>
</dbReference>
<dbReference type="Gene3D" id="1.10.3470.10">
    <property type="entry name" value="ABC transporter involved in vitamin B12 uptake, BtuC"/>
    <property type="match status" value="1"/>
</dbReference>
<dbReference type="HAMAP" id="MF_01004">
    <property type="entry name" value="BtuC"/>
    <property type="match status" value="1"/>
</dbReference>
<dbReference type="InterPro" id="IPR037294">
    <property type="entry name" value="ABC_BtuC-like"/>
</dbReference>
<dbReference type="InterPro" id="IPR023691">
    <property type="entry name" value="ABC_transptr_BtuC"/>
</dbReference>
<dbReference type="InterPro" id="IPR000522">
    <property type="entry name" value="ABC_transptr_permease_BtuC"/>
</dbReference>
<dbReference type="NCBIfam" id="NF003001">
    <property type="entry name" value="PRK03784.1"/>
    <property type="match status" value="1"/>
</dbReference>
<dbReference type="PANTHER" id="PTHR30472">
    <property type="entry name" value="FERRIC ENTEROBACTIN TRANSPORT SYSTEM PERMEASE PROTEIN"/>
    <property type="match status" value="1"/>
</dbReference>
<dbReference type="PANTHER" id="PTHR30472:SF29">
    <property type="entry name" value="VITAMIN B12 IMPORT SYSTEM PERMEASE PROTEIN BTUC"/>
    <property type="match status" value="1"/>
</dbReference>
<dbReference type="Pfam" id="PF01032">
    <property type="entry name" value="FecCD"/>
    <property type="match status" value="1"/>
</dbReference>
<dbReference type="SUPFAM" id="SSF81345">
    <property type="entry name" value="ABC transporter involved in vitamin B12 uptake, BtuC"/>
    <property type="match status" value="1"/>
</dbReference>
<organism>
    <name type="scientific">Yersinia pseudotuberculosis serotype O:1b (strain IP 31758)</name>
    <dbReference type="NCBI Taxonomy" id="349747"/>
    <lineage>
        <taxon>Bacteria</taxon>
        <taxon>Pseudomonadati</taxon>
        <taxon>Pseudomonadota</taxon>
        <taxon>Gammaproteobacteria</taxon>
        <taxon>Enterobacterales</taxon>
        <taxon>Yersiniaceae</taxon>
        <taxon>Yersinia</taxon>
    </lineage>
</organism>
<name>BTUC_YERP3</name>
<gene>
    <name evidence="1" type="primary">btuC</name>
    <name type="ordered locus">YpsIP31758_1720</name>
</gene>
<protein>
    <recommendedName>
        <fullName evidence="1">Vitamin B12 import system permease protein BtuC</fullName>
    </recommendedName>
</protein>
<sequence>MQTSQLFTALQQRQRQRDYRYLTGLVVMLLFALLISLCAGDVWIWPEHWFSESGKLFVWQLRLPRSMAVIMVGASLAVSGAVMQALFENPLAEPGLLGVANGAGVALVTAVLLGHGLLPIWVLSTCAIIGALLMTSILLSFTRRRLLTNAQLLLVGVALGIICSAMMTWAVYFSTSLDLRQLMYWMMGGFSGVDWRQQSLVLALLPTVIWLCCQGRVLNFMSLGEQQARQLGVSLHLWRNLLVLAIGLLVGISVALAGVISFIGLVIPHILRLTGLTDQRRLLAGCAFAGGGVLLLADVVARTVLSSAELPIGVVTATLGSPLFIWLLIRVKGVK</sequence>
<proteinExistence type="inferred from homology"/>
<comment type="function">
    <text evidence="1">Part of the ABC transporter complex BtuCDF involved in vitamin B12 import. Involved in the translocation of the substrate across the membrane.</text>
</comment>
<comment type="subunit">
    <text evidence="1">The complex is composed of two ATP-binding proteins (BtuD), two transmembrane proteins (BtuC) and a solute-binding protein (BtuF).</text>
</comment>
<comment type="subcellular location">
    <subcellularLocation>
        <location evidence="1">Cell inner membrane</location>
        <topology evidence="1">Multi-pass membrane protein</topology>
    </subcellularLocation>
</comment>
<comment type="similarity">
    <text evidence="1">Belongs to the binding-protein-dependent transport system permease family. FecCD subfamily.</text>
</comment>